<protein>
    <recommendedName>
        <fullName evidence="1">Hypoxanthine/guanine phosphoribosyltransferase</fullName>
        <shortName evidence="1">HGPRTase</shortName>
        <ecNumber evidence="1">2.4.2.8</ecNumber>
    </recommendedName>
</protein>
<proteinExistence type="inferred from homology"/>
<feature type="chain" id="PRO_0000149496" description="Hypoxanthine/guanine phosphoribosyltransferase">
    <location>
        <begin position="1"/>
        <end position="183"/>
    </location>
</feature>
<gene>
    <name evidence="1" type="primary">hpt</name>
    <name type="ordered locus">MJ1655</name>
</gene>
<keyword id="KW-0963">Cytoplasm</keyword>
<keyword id="KW-0328">Glycosyltransferase</keyword>
<keyword id="KW-0660">Purine salvage</keyword>
<keyword id="KW-1185">Reference proteome</keyword>
<keyword id="KW-0808">Transferase</keyword>
<accession>Q59049</accession>
<sequence>MLLEETLKSCPIVKRGEYHYFIHPISDGVPVVEPKLLREVATRIIKIGDFEGATKLVTAEAMGIPLVTTLSLYTDIPYVIMRKREYKLPGEIPVFQSTGYSKGQLYLNGIEKGDKVVIIDDVISTGGTMIAIIDALKRAGAEIKDIICVIERGEGKKIVEEKTGYKIKTLVKIDVVDGKVVIL</sequence>
<evidence type="ECO:0000255" key="1">
    <source>
        <dbReference type="HAMAP-Rule" id="MF_01467"/>
    </source>
</evidence>
<dbReference type="EC" id="2.4.2.8" evidence="1"/>
<dbReference type="EMBL" id="L77117">
    <property type="protein sequence ID" value="AAB99676.1"/>
    <property type="molecule type" value="Genomic_DNA"/>
</dbReference>
<dbReference type="PIR" id="E64506">
    <property type="entry name" value="E64506"/>
</dbReference>
<dbReference type="RefSeq" id="WP_010871179.1">
    <property type="nucleotide sequence ID" value="NC_000909.1"/>
</dbReference>
<dbReference type="SMR" id="Q59049"/>
<dbReference type="FunCoup" id="Q59049">
    <property type="interactions" value="55"/>
</dbReference>
<dbReference type="STRING" id="243232.MJ_1655"/>
<dbReference type="PaxDb" id="243232-MJ_1655"/>
<dbReference type="EnsemblBacteria" id="AAB99676">
    <property type="protein sequence ID" value="AAB99676"/>
    <property type="gene ID" value="MJ_1655"/>
</dbReference>
<dbReference type="GeneID" id="1452564"/>
<dbReference type="KEGG" id="mja:MJ_1655"/>
<dbReference type="eggNOG" id="arCOG00030">
    <property type="taxonomic scope" value="Archaea"/>
</dbReference>
<dbReference type="HOGENOM" id="CLU_126376_0_0_2"/>
<dbReference type="InParanoid" id="Q59049"/>
<dbReference type="OrthoDB" id="8323at2157"/>
<dbReference type="PhylomeDB" id="Q59049"/>
<dbReference type="UniPathway" id="UPA00591">
    <property type="reaction ID" value="UER00648"/>
</dbReference>
<dbReference type="Proteomes" id="UP000000805">
    <property type="component" value="Chromosome"/>
</dbReference>
<dbReference type="GO" id="GO:0005737">
    <property type="term" value="C:cytoplasm"/>
    <property type="evidence" value="ECO:0007669"/>
    <property type="project" value="UniProtKB-SubCell"/>
</dbReference>
<dbReference type="GO" id="GO:0052657">
    <property type="term" value="F:guanine phosphoribosyltransferase activity"/>
    <property type="evidence" value="ECO:0007669"/>
    <property type="project" value="RHEA"/>
</dbReference>
<dbReference type="GO" id="GO:0004422">
    <property type="term" value="F:hypoxanthine phosphoribosyltransferase activity"/>
    <property type="evidence" value="ECO:0007669"/>
    <property type="project" value="UniProtKB-UniRule"/>
</dbReference>
<dbReference type="GO" id="GO:0032264">
    <property type="term" value="P:IMP salvage"/>
    <property type="evidence" value="ECO:0007669"/>
    <property type="project" value="UniProtKB-UniRule"/>
</dbReference>
<dbReference type="GO" id="GO:0006166">
    <property type="term" value="P:purine ribonucleoside salvage"/>
    <property type="evidence" value="ECO:0007669"/>
    <property type="project" value="UniProtKB-KW"/>
</dbReference>
<dbReference type="CDD" id="cd06223">
    <property type="entry name" value="PRTases_typeI"/>
    <property type="match status" value="1"/>
</dbReference>
<dbReference type="Gene3D" id="3.40.50.2020">
    <property type="match status" value="1"/>
</dbReference>
<dbReference type="HAMAP" id="MF_01467">
    <property type="entry name" value="Hypx_phosphoribosyltr"/>
    <property type="match status" value="1"/>
</dbReference>
<dbReference type="InterPro" id="IPR026597">
    <property type="entry name" value="HGPRTase-like"/>
</dbReference>
<dbReference type="InterPro" id="IPR000836">
    <property type="entry name" value="PRibTrfase_dom"/>
</dbReference>
<dbReference type="InterPro" id="IPR029057">
    <property type="entry name" value="PRTase-like"/>
</dbReference>
<dbReference type="InterPro" id="IPR050118">
    <property type="entry name" value="Pur/Pyrimidine_PRTase"/>
</dbReference>
<dbReference type="NCBIfam" id="NF040646">
    <property type="entry name" value="HPT_Archaea"/>
    <property type="match status" value="1"/>
</dbReference>
<dbReference type="NCBIfam" id="NF002635">
    <property type="entry name" value="PRK02304.1-4"/>
    <property type="match status" value="1"/>
</dbReference>
<dbReference type="PANTHER" id="PTHR43864">
    <property type="entry name" value="HYPOXANTHINE/GUANINE PHOSPHORIBOSYLTRANSFERASE"/>
    <property type="match status" value="1"/>
</dbReference>
<dbReference type="PANTHER" id="PTHR43864:SF1">
    <property type="entry name" value="XANTHINE PHOSPHORIBOSYLTRANSFERASE"/>
    <property type="match status" value="1"/>
</dbReference>
<dbReference type="Pfam" id="PF00156">
    <property type="entry name" value="Pribosyltran"/>
    <property type="match status" value="1"/>
</dbReference>
<dbReference type="SUPFAM" id="SSF53271">
    <property type="entry name" value="PRTase-like"/>
    <property type="match status" value="1"/>
</dbReference>
<dbReference type="PROSITE" id="PS00103">
    <property type="entry name" value="PUR_PYR_PR_TRANSFER"/>
    <property type="match status" value="1"/>
</dbReference>
<comment type="function">
    <text evidence="1">Catalyzes a salvage reaction resulting in the formation of IMP that is energically less costly than de novo synthesis.</text>
</comment>
<comment type="catalytic activity">
    <reaction evidence="1">
        <text>IMP + diphosphate = hypoxanthine + 5-phospho-alpha-D-ribose 1-diphosphate</text>
        <dbReference type="Rhea" id="RHEA:17973"/>
        <dbReference type="ChEBI" id="CHEBI:17368"/>
        <dbReference type="ChEBI" id="CHEBI:33019"/>
        <dbReference type="ChEBI" id="CHEBI:58017"/>
        <dbReference type="ChEBI" id="CHEBI:58053"/>
        <dbReference type="EC" id="2.4.2.8"/>
    </reaction>
</comment>
<comment type="catalytic activity">
    <reaction evidence="1">
        <text>GMP + diphosphate = guanine + 5-phospho-alpha-D-ribose 1-diphosphate</text>
        <dbReference type="Rhea" id="RHEA:25424"/>
        <dbReference type="ChEBI" id="CHEBI:16235"/>
        <dbReference type="ChEBI" id="CHEBI:33019"/>
        <dbReference type="ChEBI" id="CHEBI:58017"/>
        <dbReference type="ChEBI" id="CHEBI:58115"/>
        <dbReference type="EC" id="2.4.2.8"/>
    </reaction>
</comment>
<comment type="pathway">
    <text evidence="1">Purine metabolism; IMP biosynthesis via salvage pathway; IMP from hypoxanthine: step 1/1.</text>
</comment>
<comment type="subunit">
    <text evidence="1">Homodimer.</text>
</comment>
<comment type="subcellular location">
    <subcellularLocation>
        <location>Cytoplasm</location>
    </subcellularLocation>
</comment>
<comment type="similarity">
    <text evidence="1">Belongs to the purine/pyrimidine phosphoribosyltransferase family. Archaeal HPRT subfamily.</text>
</comment>
<reference key="1">
    <citation type="journal article" date="1996" name="Science">
        <title>Complete genome sequence of the methanogenic archaeon, Methanococcus jannaschii.</title>
        <authorList>
            <person name="Bult C.J."/>
            <person name="White O."/>
            <person name="Olsen G.J."/>
            <person name="Zhou L."/>
            <person name="Fleischmann R.D."/>
            <person name="Sutton G.G."/>
            <person name="Blake J.A."/>
            <person name="FitzGerald L.M."/>
            <person name="Clayton R.A."/>
            <person name="Gocayne J.D."/>
            <person name="Kerlavage A.R."/>
            <person name="Dougherty B.A."/>
            <person name="Tomb J.-F."/>
            <person name="Adams M.D."/>
            <person name="Reich C.I."/>
            <person name="Overbeek R."/>
            <person name="Kirkness E.F."/>
            <person name="Weinstock K.G."/>
            <person name="Merrick J.M."/>
            <person name="Glodek A."/>
            <person name="Scott J.L."/>
            <person name="Geoghagen N.S.M."/>
            <person name="Weidman J.F."/>
            <person name="Fuhrmann J.L."/>
            <person name="Nguyen D."/>
            <person name="Utterback T.R."/>
            <person name="Kelley J.M."/>
            <person name="Peterson J.D."/>
            <person name="Sadow P.W."/>
            <person name="Hanna M.C."/>
            <person name="Cotton M.D."/>
            <person name="Roberts K.M."/>
            <person name="Hurst M.A."/>
            <person name="Kaine B.P."/>
            <person name="Borodovsky M."/>
            <person name="Klenk H.-P."/>
            <person name="Fraser C.M."/>
            <person name="Smith H.O."/>
            <person name="Woese C.R."/>
            <person name="Venter J.C."/>
        </authorList>
    </citation>
    <scope>NUCLEOTIDE SEQUENCE [LARGE SCALE GENOMIC DNA]</scope>
    <source>
        <strain>ATCC 43067 / DSM 2661 / JAL-1 / JCM 10045 / NBRC 100440</strain>
    </source>
</reference>
<organism>
    <name type="scientific">Methanocaldococcus jannaschii (strain ATCC 43067 / DSM 2661 / JAL-1 / JCM 10045 / NBRC 100440)</name>
    <name type="common">Methanococcus jannaschii</name>
    <dbReference type="NCBI Taxonomy" id="243232"/>
    <lineage>
        <taxon>Archaea</taxon>
        <taxon>Methanobacteriati</taxon>
        <taxon>Methanobacteriota</taxon>
        <taxon>Methanomada group</taxon>
        <taxon>Methanococci</taxon>
        <taxon>Methanococcales</taxon>
        <taxon>Methanocaldococcaceae</taxon>
        <taxon>Methanocaldococcus</taxon>
    </lineage>
</organism>
<name>HPRT_METJA</name>